<protein>
    <recommendedName>
        <fullName evidence="1">Malonate decarboxylase acyl carrier protein</fullName>
    </recommendedName>
    <alternativeName>
        <fullName evidence="1">Malonate decarboxylase subunit delta</fullName>
    </alternativeName>
</protein>
<feature type="chain" id="PRO_1000191175" description="Malonate decarboxylase acyl carrier protein">
    <location>
        <begin position="1"/>
        <end position="106"/>
    </location>
</feature>
<feature type="modified residue" description="O-(phosphoribosyl dephospho-coenzyme A)serine" evidence="1">
    <location>
        <position position="28"/>
    </location>
</feature>
<dbReference type="EMBL" id="AM743169">
    <property type="protein sequence ID" value="CAQ44787.1"/>
    <property type="molecule type" value="Genomic_DNA"/>
</dbReference>
<dbReference type="RefSeq" id="WP_005408516.1">
    <property type="nucleotide sequence ID" value="NC_010943.1"/>
</dbReference>
<dbReference type="SMR" id="B2FSQ5"/>
<dbReference type="EnsemblBacteria" id="CAQ44787">
    <property type="protein sequence ID" value="CAQ44787"/>
    <property type="gene ID" value="Smlt1231"/>
</dbReference>
<dbReference type="GeneID" id="93832317"/>
<dbReference type="KEGG" id="sml:Smlt1231"/>
<dbReference type="eggNOG" id="COG3052">
    <property type="taxonomic scope" value="Bacteria"/>
</dbReference>
<dbReference type="HOGENOM" id="CLU_173135_0_0_6"/>
<dbReference type="Proteomes" id="UP000008840">
    <property type="component" value="Chromosome"/>
</dbReference>
<dbReference type="GO" id="GO:0005737">
    <property type="term" value="C:cytoplasm"/>
    <property type="evidence" value="ECO:0007669"/>
    <property type="project" value="UniProtKB-SubCell"/>
</dbReference>
<dbReference type="GO" id="GO:0000036">
    <property type="term" value="F:acyl carrier activity"/>
    <property type="evidence" value="ECO:0007669"/>
    <property type="project" value="UniProtKB-UniRule"/>
</dbReference>
<dbReference type="HAMAP" id="MF_00710">
    <property type="entry name" value="Malonate_deCO2ase_dsu"/>
    <property type="match status" value="1"/>
</dbReference>
<dbReference type="InterPro" id="IPR023439">
    <property type="entry name" value="Mal_deCO2ase/Cit_lyase_ACP"/>
</dbReference>
<dbReference type="InterPro" id="IPR009662">
    <property type="entry name" value="Malonate_deCO2ase_dsu"/>
</dbReference>
<dbReference type="NCBIfam" id="TIGR03130">
    <property type="entry name" value="malonate_delta"/>
    <property type="match status" value="1"/>
</dbReference>
<dbReference type="Pfam" id="PF06857">
    <property type="entry name" value="ACP"/>
    <property type="match status" value="1"/>
</dbReference>
<reference key="1">
    <citation type="journal article" date="2008" name="Genome Biol.">
        <title>The complete genome, comparative and functional analysis of Stenotrophomonas maltophilia reveals an organism heavily shielded by drug resistance determinants.</title>
        <authorList>
            <person name="Crossman L.C."/>
            <person name="Gould V.C."/>
            <person name="Dow J.M."/>
            <person name="Vernikos G.S."/>
            <person name="Okazaki A."/>
            <person name="Sebaihia M."/>
            <person name="Saunders D."/>
            <person name="Arrowsmith C."/>
            <person name="Carver T."/>
            <person name="Peters N."/>
            <person name="Adlem E."/>
            <person name="Kerhornou A."/>
            <person name="Lord A."/>
            <person name="Murphy L."/>
            <person name="Seeger K."/>
            <person name="Squares R."/>
            <person name="Rutter S."/>
            <person name="Quail M.A."/>
            <person name="Rajandream M.A."/>
            <person name="Harris D."/>
            <person name="Churcher C."/>
            <person name="Bentley S.D."/>
            <person name="Parkhill J."/>
            <person name="Thomson N.R."/>
            <person name="Avison M.B."/>
        </authorList>
    </citation>
    <scope>NUCLEOTIDE SEQUENCE [LARGE SCALE GENOMIC DNA]</scope>
    <source>
        <strain>K279a</strain>
    </source>
</reference>
<comment type="function">
    <text evidence="1">Subunit of malonate decarboxylase, it is an acyl carrier protein to which acetyl and malonyl thioester residues are bound via a 2'-(5''-phosphoribosyl)-3'-dephospho-CoA prosthetic group and turn over during the catalytic mechanism.</text>
</comment>
<comment type="subcellular location">
    <subcellularLocation>
        <location evidence="1">Cytoplasm</location>
    </subcellularLocation>
</comment>
<comment type="PTM">
    <text evidence="1">Covalently binds the prosthetic group of malonate decarboxylase.</text>
</comment>
<comment type="similarity">
    <text evidence="1">Belongs to the MdcC family.</text>
</comment>
<proteinExistence type="inferred from homology"/>
<accession>B2FSQ5</accession>
<organism>
    <name type="scientific">Stenotrophomonas maltophilia (strain K279a)</name>
    <dbReference type="NCBI Taxonomy" id="522373"/>
    <lineage>
        <taxon>Bacteria</taxon>
        <taxon>Pseudomonadati</taxon>
        <taxon>Pseudomonadota</taxon>
        <taxon>Gammaproteobacteria</taxon>
        <taxon>Lysobacterales</taxon>
        <taxon>Lysobacteraceae</taxon>
        <taxon>Stenotrophomonas</taxon>
        <taxon>Stenotrophomonas maltophilia group</taxon>
    </lineage>
</organism>
<evidence type="ECO:0000255" key="1">
    <source>
        <dbReference type="HAMAP-Rule" id="MF_00710"/>
    </source>
</evidence>
<name>MDCC_STRMK</name>
<sequence length="106" mass="11311">METLDYRFEGHTAVQFPRGAVLVGVLASGNLEILLEPAALDGAMTVRIITAAKGFGSVWQAVISDFAQRHPLRDVRISINDAGATPAVVSLRLDQAVETLLAGEPR</sequence>
<keyword id="KW-0963">Cytoplasm</keyword>
<keyword id="KW-0597">Phosphoprotein</keyword>
<keyword id="KW-1185">Reference proteome</keyword>
<gene>
    <name evidence="1" type="primary">mdcC</name>
    <name type="ordered locus">Smlt1231</name>
</gene>